<evidence type="ECO:0000250" key="1"/>
<evidence type="ECO:0000255" key="2"/>
<evidence type="ECO:0000255" key="3">
    <source>
        <dbReference type="PROSITE-ProRule" id="PRU00107"/>
    </source>
</evidence>
<evidence type="ECO:0000255" key="4">
    <source>
        <dbReference type="PROSITE-ProRule" id="PRU00169"/>
    </source>
</evidence>
<evidence type="ECO:0000305" key="5"/>
<protein>
    <recommendedName>
        <fullName>Autoinducer 2 sensor kinase/phosphatase LuxQ</fullName>
        <ecNumber>2.7.13.3</ecNumber>
        <ecNumber>3.1.3.-</ecNumber>
    </recommendedName>
</protein>
<name>LUXQ_VIBVU</name>
<reference key="1">
    <citation type="submission" date="2002-12" db="EMBL/GenBank/DDBJ databases">
        <title>Complete genome sequence of Vibrio vulnificus CMCP6.</title>
        <authorList>
            <person name="Rhee J.H."/>
            <person name="Kim S.Y."/>
            <person name="Chung S.S."/>
            <person name="Kim J.J."/>
            <person name="Moon Y.H."/>
            <person name="Jeong H."/>
            <person name="Choy H.E."/>
        </authorList>
    </citation>
    <scope>NUCLEOTIDE SEQUENCE [LARGE SCALE GENOMIC DNA]</scope>
    <source>
        <strain>CMCP6</strain>
    </source>
</reference>
<proteinExistence type="inferred from homology"/>
<accession>Q8D5Z6</accession>
<dbReference type="EC" id="2.7.13.3"/>
<dbReference type="EC" id="3.1.3.-"/>
<dbReference type="EMBL" id="AE016796">
    <property type="protein sequence ID" value="AAO07683.1"/>
    <property type="molecule type" value="Genomic_DNA"/>
</dbReference>
<dbReference type="RefSeq" id="WP_011081679.1">
    <property type="nucleotide sequence ID" value="NC_004460.2"/>
</dbReference>
<dbReference type="SMR" id="Q8D5Z6"/>
<dbReference type="KEGG" id="vvu:VV2_0752"/>
<dbReference type="HOGENOM" id="CLU_000445_74_1_6"/>
<dbReference type="Proteomes" id="UP000002275">
    <property type="component" value="Chromosome 2"/>
</dbReference>
<dbReference type="GO" id="GO:0005886">
    <property type="term" value="C:plasma membrane"/>
    <property type="evidence" value="ECO:0007669"/>
    <property type="project" value="UniProtKB-SubCell"/>
</dbReference>
<dbReference type="GO" id="GO:0005524">
    <property type="term" value="F:ATP binding"/>
    <property type="evidence" value="ECO:0007669"/>
    <property type="project" value="UniProtKB-KW"/>
</dbReference>
<dbReference type="GO" id="GO:0009927">
    <property type="term" value="F:histidine phosphotransfer kinase activity"/>
    <property type="evidence" value="ECO:0007669"/>
    <property type="project" value="TreeGrafter"/>
</dbReference>
<dbReference type="GO" id="GO:0004721">
    <property type="term" value="F:phosphoprotein phosphatase activity"/>
    <property type="evidence" value="ECO:0007669"/>
    <property type="project" value="UniProtKB-KW"/>
</dbReference>
<dbReference type="GO" id="GO:0000155">
    <property type="term" value="F:phosphorelay sensor kinase activity"/>
    <property type="evidence" value="ECO:0007669"/>
    <property type="project" value="InterPro"/>
</dbReference>
<dbReference type="CDD" id="cd16922">
    <property type="entry name" value="HATPase_EvgS-ArcB-TorS-like"/>
    <property type="match status" value="1"/>
</dbReference>
<dbReference type="CDD" id="cd00082">
    <property type="entry name" value="HisKA"/>
    <property type="match status" value="1"/>
</dbReference>
<dbReference type="CDD" id="cd17546">
    <property type="entry name" value="REC_hyHK_CKI1_RcsC-like"/>
    <property type="match status" value="1"/>
</dbReference>
<dbReference type="FunFam" id="1.10.287.130:FF:000091">
    <property type="entry name" value="Autoinducer 2 sensor kinase/phosphatase LuxQ"/>
    <property type="match status" value="1"/>
</dbReference>
<dbReference type="FunFam" id="3.40.50.2300:FF:000322">
    <property type="entry name" value="Autoinducer 2 sensor kinase/phosphatase luxQ"/>
    <property type="match status" value="1"/>
</dbReference>
<dbReference type="FunFam" id="3.30.565.10:FF:000010">
    <property type="entry name" value="Sensor histidine kinase RcsC"/>
    <property type="match status" value="1"/>
</dbReference>
<dbReference type="Gene3D" id="1.10.287.130">
    <property type="match status" value="1"/>
</dbReference>
<dbReference type="Gene3D" id="3.40.50.2300">
    <property type="match status" value="1"/>
</dbReference>
<dbReference type="Gene3D" id="3.30.565.10">
    <property type="entry name" value="Histidine kinase-like ATPase, C-terminal domain"/>
    <property type="match status" value="1"/>
</dbReference>
<dbReference type="Gene3D" id="2.20.20.100">
    <property type="entry name" value="LuxQ periplasmic domain, C-terminal subdomain"/>
    <property type="match status" value="1"/>
</dbReference>
<dbReference type="Gene3D" id="3.30.450.220">
    <property type="entry name" value="LuxQ periplasmic domain, N-terminal subdomain"/>
    <property type="match status" value="1"/>
</dbReference>
<dbReference type="Gene3D" id="3.30.450.20">
    <property type="entry name" value="PAS domain"/>
    <property type="match status" value="1"/>
</dbReference>
<dbReference type="InterPro" id="IPR053413">
    <property type="entry name" value="AI-2_sensor_kinase/phosphatase"/>
</dbReference>
<dbReference type="InterPro" id="IPR011006">
    <property type="entry name" value="CheY-like_superfamily"/>
</dbReference>
<dbReference type="InterPro" id="IPR036890">
    <property type="entry name" value="HATPase_C_sf"/>
</dbReference>
<dbReference type="InterPro" id="IPR005467">
    <property type="entry name" value="His_kinase_dom"/>
</dbReference>
<dbReference type="InterPro" id="IPR003661">
    <property type="entry name" value="HisK_dim/P_dom"/>
</dbReference>
<dbReference type="InterPro" id="IPR036097">
    <property type="entry name" value="HisK_dim/P_sf"/>
</dbReference>
<dbReference type="InterPro" id="IPR015387">
    <property type="entry name" value="LuxQ-periplasm_dom"/>
</dbReference>
<dbReference type="InterPro" id="IPR043056">
    <property type="entry name" value="LuxQ-periplasm_N"/>
</dbReference>
<dbReference type="InterPro" id="IPR035965">
    <property type="entry name" value="PAS-like_dom_sf"/>
</dbReference>
<dbReference type="InterPro" id="IPR029151">
    <property type="entry name" value="Sensor-like_sf"/>
</dbReference>
<dbReference type="InterPro" id="IPR004358">
    <property type="entry name" value="Sig_transdc_His_kin-like_C"/>
</dbReference>
<dbReference type="InterPro" id="IPR001789">
    <property type="entry name" value="Sig_transdc_resp-reg_receiver"/>
</dbReference>
<dbReference type="NCBIfam" id="NF041947">
    <property type="entry name" value="LuxQ_Vibrio"/>
    <property type="match status" value="1"/>
</dbReference>
<dbReference type="PANTHER" id="PTHR43047:SF72">
    <property type="entry name" value="OSMOSENSING HISTIDINE PROTEIN KINASE SLN1"/>
    <property type="match status" value="1"/>
</dbReference>
<dbReference type="PANTHER" id="PTHR43047">
    <property type="entry name" value="TWO-COMPONENT HISTIDINE PROTEIN KINASE"/>
    <property type="match status" value="1"/>
</dbReference>
<dbReference type="Pfam" id="PF02518">
    <property type="entry name" value="HATPase_c"/>
    <property type="match status" value="1"/>
</dbReference>
<dbReference type="Pfam" id="PF00512">
    <property type="entry name" value="HisKA"/>
    <property type="match status" value="1"/>
</dbReference>
<dbReference type="Pfam" id="PF09308">
    <property type="entry name" value="LuxQ-periplasm"/>
    <property type="match status" value="1"/>
</dbReference>
<dbReference type="Pfam" id="PF00072">
    <property type="entry name" value="Response_reg"/>
    <property type="match status" value="1"/>
</dbReference>
<dbReference type="PRINTS" id="PR00344">
    <property type="entry name" value="BCTRLSENSOR"/>
</dbReference>
<dbReference type="SMART" id="SM00387">
    <property type="entry name" value="HATPase_c"/>
    <property type="match status" value="1"/>
</dbReference>
<dbReference type="SMART" id="SM00388">
    <property type="entry name" value="HisKA"/>
    <property type="match status" value="1"/>
</dbReference>
<dbReference type="SMART" id="SM00448">
    <property type="entry name" value="REC"/>
    <property type="match status" value="1"/>
</dbReference>
<dbReference type="SUPFAM" id="SSF55874">
    <property type="entry name" value="ATPase domain of HSP90 chaperone/DNA topoisomerase II/histidine kinase"/>
    <property type="match status" value="1"/>
</dbReference>
<dbReference type="SUPFAM" id="SSF52172">
    <property type="entry name" value="CheY-like"/>
    <property type="match status" value="1"/>
</dbReference>
<dbReference type="SUPFAM" id="SSF47384">
    <property type="entry name" value="Homodimeric domain of signal transducing histidine kinase"/>
    <property type="match status" value="1"/>
</dbReference>
<dbReference type="SUPFAM" id="SSF55785">
    <property type="entry name" value="PYP-like sensor domain (PAS domain)"/>
    <property type="match status" value="1"/>
</dbReference>
<dbReference type="SUPFAM" id="SSF103190">
    <property type="entry name" value="Sensory domain-like"/>
    <property type="match status" value="1"/>
</dbReference>
<dbReference type="PROSITE" id="PS50109">
    <property type="entry name" value="HIS_KIN"/>
    <property type="match status" value="1"/>
</dbReference>
<dbReference type="PROSITE" id="PS50110">
    <property type="entry name" value="RESPONSE_REGULATORY"/>
    <property type="match status" value="1"/>
</dbReference>
<sequence length="857" mass="96734">MTNEQLQRKHQSLATLITRIIFLVLGLITIGIFIQSYYFSNKIIKQEVMLTKQQTSALVKSLFNNHLSILQIHHDSNSKNEAIRRFFLDGDDEKLEYYFLSMDQADPTHTPEFRFLTTGEGLLWDDGNAHFYGVNEVLLEKISQSVLFGNNWHFMSLHTLMGLRNMLVRRSPVIDTTTGEVLGQYYISVVLDNNFPLVEMLESGSNSDNIVMLVGDKVISHSLSGNEPYDLDSLLAMRDEPSAFDDCLISQTPIEINSTDTLVSILAIQENSHVASLQRQHYLGLATSVVLMLMLSLAIRSWIQNRVANALESLMAYSRFAGTGEKYERFNGSDILEFAHIGHTLENTFEQLESQRRSFQDLFNFALSPMMVWSESGLLIQMNPAAMKELGIEHASPQDFSNPLFQLFKLKLSPHLKMAAQGATLTGINVPIGEKIFRWNLSPIVVENGISGIIVQGQDITTLIDAEKQSNLARREAEQSAKTRADFLAKMSHEIRTPLNGILGIAQLLKRSVNDAENLKQVDVLCNSGEHLLAVLNDILDFSKIEQGKFNIKKRDFNFYDTLNTLENIYRPICREKGVSFEIHNQIPLDCQLHTDQVRLNQIMFNLISNAVKFTPAGRIEVSFKLEKFARSEHSILSIQVSDTGIGIDESKLESIFEPFVQADSLSTREYGGSGLGLTIVKNLVEMLEGEISVQSELCKGSTFYLSIPVEKGECEEQKTPTNPKPEQLFGQGLKVLLVEDNHTNAFILKAFCQKYQMSVEWVQDGTQALEKLKEHAFDLILMDNQLPKMGGIEATREIRETLKLGTPIYACTADAQESTKQEFLSAGANRVIVKPIKEQELHDELLHFKAHYWVEH</sequence>
<keyword id="KW-0067">ATP-binding</keyword>
<keyword id="KW-0997">Cell inner membrane</keyword>
<keyword id="KW-1003">Cell membrane</keyword>
<keyword id="KW-0378">Hydrolase</keyword>
<keyword id="KW-0418">Kinase</keyword>
<keyword id="KW-0472">Membrane</keyword>
<keyword id="KW-0547">Nucleotide-binding</keyword>
<keyword id="KW-0597">Phosphoprotein</keyword>
<keyword id="KW-0904">Protein phosphatase</keyword>
<keyword id="KW-0808">Transferase</keyword>
<keyword id="KW-0812">Transmembrane</keyword>
<keyword id="KW-1133">Transmembrane helix</keyword>
<keyword id="KW-0902">Two-component regulatory system</keyword>
<feature type="chain" id="PRO_0000074785" description="Autoinducer 2 sensor kinase/phosphatase LuxQ">
    <location>
        <begin position="1"/>
        <end position="857"/>
    </location>
</feature>
<feature type="transmembrane region" description="Helical" evidence="2">
    <location>
        <begin position="20"/>
        <end position="40"/>
    </location>
</feature>
<feature type="transmembrane region" description="Helical" evidence="2">
    <location>
        <begin position="283"/>
        <end position="303"/>
    </location>
</feature>
<feature type="domain" description="Histidine kinase" evidence="3">
    <location>
        <begin position="490"/>
        <end position="712"/>
    </location>
</feature>
<feature type="domain" description="Response regulatory" evidence="4">
    <location>
        <begin position="735"/>
        <end position="850"/>
    </location>
</feature>
<feature type="modified residue" description="Phosphohistidine; by autocatalysis" evidence="3">
    <location>
        <position position="493"/>
    </location>
</feature>
<feature type="modified residue" description="4-aspartylphosphate" evidence="4">
    <location>
        <position position="784"/>
    </location>
</feature>
<comment type="function">
    <text evidence="1">At low cell density, in absence of autoinducer has a kinase activity, and autophosphorylates on a histidine residue. The phosphoryl group is then transferred to an aspartate residue in the response regulator domain. The phosphoryl group is transferred to LuxU, and ultimately to LuxO. At high cell density, in the presence of autoinducer, the kinase activity is inactivated, and the response regulator domain has a phosphatase activity (By similarity).</text>
</comment>
<comment type="catalytic activity">
    <reaction>
        <text>ATP + protein L-histidine = ADP + protein N-phospho-L-histidine.</text>
        <dbReference type="EC" id="2.7.13.3"/>
    </reaction>
</comment>
<comment type="subunit">
    <text evidence="1">Binds the complex formed by the autoinducer and LuxP.</text>
</comment>
<comment type="subcellular location">
    <subcellularLocation>
        <location evidence="5">Cell inner membrane</location>
        <topology evidence="5">Multi-pass membrane protein</topology>
    </subcellularLocation>
</comment>
<organism>
    <name type="scientific">Vibrio vulnificus (strain CMCP6)</name>
    <dbReference type="NCBI Taxonomy" id="216895"/>
    <lineage>
        <taxon>Bacteria</taxon>
        <taxon>Pseudomonadati</taxon>
        <taxon>Pseudomonadota</taxon>
        <taxon>Gammaproteobacteria</taxon>
        <taxon>Vibrionales</taxon>
        <taxon>Vibrionaceae</taxon>
        <taxon>Vibrio</taxon>
    </lineage>
</organism>
<gene>
    <name type="primary">luxQ</name>
    <name type="ordered locus">VV2_0752</name>
</gene>